<name>RUSF1_PONAB</name>
<sequence length="468" mass="51083">MADDAGLETSLCSEQFGSGEARGCRVAADGSLQWEVGGWRWWGLSRAFTVKPEGRDSGEVGAPGAPSPPLSGLQAVFLPQGFPDSVSPDYLPYQLWDSVQAFASGLSGSLATQAVLLGIGVGNAKATVSAATATWLVKDSTGMLGRIVFAWWKGSKLDCNAKQWRLFADILNDVAMFLEIMAPVYPICFTMTVSTSNLAKCIVSVAGGATRAALTVHQARRNNMADVSAKDSSQETLVNLVGLLVSLLMLPLVSGCPGFSLGCFFFLTALHIYANYRAVRALVMETLNEGRLRLVLKHYLQRGEVLNPTAANRMEPLWTGFWPAPSLSLGVPLHRLVSSVFELQQLVEGHQEPYLLCWDQSRNQVQVVLNQKAGPKTILRAATHGLMLGALQGDGPLPAELEELRNRVQAGPKKESWVIVKETHEVLDMLFPKFLKGLQDAGWKTEKHQLEVDEWRATWLLSPEKKVL</sequence>
<evidence type="ECO:0000250" key="1">
    <source>
        <dbReference type="UniProtKB" id="Q96GQ5"/>
    </source>
</evidence>
<evidence type="ECO:0000255" key="2"/>
<evidence type="ECO:0000305" key="3"/>
<comment type="subcellular location">
    <subcellularLocation>
        <location evidence="3">Membrane</location>
        <topology evidence="3">Single-pass membrane protein</topology>
    </subcellularLocation>
</comment>
<comment type="similarity">
    <text evidence="3">Belongs to the RUS1 family.</text>
</comment>
<keyword id="KW-0007">Acetylation</keyword>
<keyword id="KW-0472">Membrane</keyword>
<keyword id="KW-0597">Phosphoprotein</keyword>
<keyword id="KW-1185">Reference proteome</keyword>
<keyword id="KW-0812">Transmembrane</keyword>
<keyword id="KW-1133">Transmembrane helix</keyword>
<reference key="1">
    <citation type="submission" date="2004-11" db="EMBL/GenBank/DDBJ databases">
        <authorList>
            <consortium name="The German cDNA consortium"/>
        </authorList>
    </citation>
    <scope>NUCLEOTIDE SEQUENCE [LARGE SCALE MRNA]</scope>
    <source>
        <tissue>Heart</tissue>
        <tissue>Kidney</tissue>
    </source>
</reference>
<organism>
    <name type="scientific">Pongo abelii</name>
    <name type="common">Sumatran orangutan</name>
    <name type="synonym">Pongo pygmaeus abelii</name>
    <dbReference type="NCBI Taxonomy" id="9601"/>
    <lineage>
        <taxon>Eukaryota</taxon>
        <taxon>Metazoa</taxon>
        <taxon>Chordata</taxon>
        <taxon>Craniata</taxon>
        <taxon>Vertebrata</taxon>
        <taxon>Euteleostomi</taxon>
        <taxon>Mammalia</taxon>
        <taxon>Eutheria</taxon>
        <taxon>Euarchontoglires</taxon>
        <taxon>Primates</taxon>
        <taxon>Haplorrhini</taxon>
        <taxon>Catarrhini</taxon>
        <taxon>Hominidae</taxon>
        <taxon>Pongo</taxon>
    </lineage>
</organism>
<protein>
    <recommendedName>
        <fullName evidence="3">RUS family member 1</fullName>
    </recommendedName>
</protein>
<proteinExistence type="evidence at transcript level"/>
<gene>
    <name type="primary">Rusf1</name>
</gene>
<accession>Q5R8F6</accession>
<accession>Q5RCH0</accession>
<feature type="initiator methionine" description="Removed" evidence="1">
    <location>
        <position position="1"/>
    </location>
</feature>
<feature type="chain" id="PRO_0000282932" description="RUS family member 1">
    <location>
        <begin position="2"/>
        <end position="468"/>
    </location>
</feature>
<feature type="transmembrane region" description="Helical" evidence="2">
    <location>
        <begin position="247"/>
        <end position="267"/>
    </location>
</feature>
<feature type="modified residue" description="N-acetylalanine" evidence="1">
    <location>
        <position position="2"/>
    </location>
</feature>
<feature type="modified residue" description="Phosphothreonine" evidence="1">
    <location>
        <position position="49"/>
    </location>
</feature>
<feature type="sequence conflict" description="In Ref. 1; CAH90537." evidence="3" ref="1">
    <original>G</original>
    <variation>S</variation>
    <location>
        <position position="105"/>
    </location>
</feature>
<feature type="sequence conflict" description="In Ref. 1; CAH90537." evidence="3" ref="1">
    <location>
        <begin position="259"/>
        <end position="260"/>
    </location>
</feature>
<dbReference type="EMBL" id="CR858300">
    <property type="protein sequence ID" value="CAH90537.1"/>
    <property type="molecule type" value="mRNA"/>
</dbReference>
<dbReference type="EMBL" id="CR859796">
    <property type="protein sequence ID" value="CAH91954.1"/>
    <property type="molecule type" value="mRNA"/>
</dbReference>
<dbReference type="RefSeq" id="NP_001126133.1">
    <property type="nucleotide sequence ID" value="NM_001132661.1"/>
</dbReference>
<dbReference type="RefSeq" id="NP_001128778.1">
    <property type="nucleotide sequence ID" value="NM_001135306.1"/>
</dbReference>
<dbReference type="RefSeq" id="XP_009234683.1">
    <property type="nucleotide sequence ID" value="XM_009236408.1"/>
</dbReference>
<dbReference type="FunCoup" id="Q5R8F6">
    <property type="interactions" value="289"/>
</dbReference>
<dbReference type="GeneID" id="100173090"/>
<dbReference type="KEGG" id="pon:100173090"/>
<dbReference type="CTD" id="64755"/>
<dbReference type="eggNOG" id="KOG4249">
    <property type="taxonomic scope" value="Eukaryota"/>
</dbReference>
<dbReference type="InParanoid" id="Q5R8F6"/>
<dbReference type="OrthoDB" id="364779at2759"/>
<dbReference type="Proteomes" id="UP000001595">
    <property type="component" value="Unplaced"/>
</dbReference>
<dbReference type="GO" id="GO:0016020">
    <property type="term" value="C:membrane"/>
    <property type="evidence" value="ECO:0007669"/>
    <property type="project" value="UniProtKB-SubCell"/>
</dbReference>
<dbReference type="InterPro" id="IPR006968">
    <property type="entry name" value="RUS_fam"/>
</dbReference>
<dbReference type="InterPro" id="IPR055412">
    <property type="entry name" value="UVB_sens_C"/>
</dbReference>
<dbReference type="InterPro" id="IPR054549">
    <property type="entry name" value="UVB_sens_RUS_dom"/>
</dbReference>
<dbReference type="PANTHER" id="PTHR12770:SF31">
    <property type="entry name" value="RUS FAMILY MEMBER 1"/>
    <property type="match status" value="1"/>
</dbReference>
<dbReference type="PANTHER" id="PTHR12770">
    <property type="entry name" value="RUS1 FAMILY PROTEIN C16ORF58"/>
    <property type="match status" value="1"/>
</dbReference>
<dbReference type="Pfam" id="PF24160">
    <property type="entry name" value="UVB_sens_C"/>
    <property type="match status" value="1"/>
</dbReference>
<dbReference type="Pfam" id="PF04884">
    <property type="entry name" value="UVB_sens_prot"/>
    <property type="match status" value="1"/>
</dbReference>